<evidence type="ECO:0000269" key="1">
    <source>
    </source>
</evidence>
<evidence type="ECO:0000269" key="2">
    <source>
    </source>
</evidence>
<evidence type="ECO:0000305" key="3"/>
<accession>Q9X9Q6</accession>
<comment type="function">
    <text evidence="1 2">Involved in the naphthalene and naphthalenesulfonate catabolic pathway. Catalyzes the transformation of trans-O-hydroxybenzylidenepyruvate (THBPA) to salicylaldehyde and pyruvate. The reaction is reversible. Can also use 2,4-dihydroxybenzalpyruvate (2,4-DHBP) and 2,6-dihydroxybenzalpyruvate (2,6-DHBP).</text>
</comment>
<comment type="catalytic activity">
    <reaction evidence="2">
        <text>(3E)-4-(2-hydroxyphenyl)-2-oxobut-3-enoate + H2O = salicylaldehyde + pyruvate</text>
        <dbReference type="Rhea" id="RHEA:27389"/>
        <dbReference type="ChEBI" id="CHEBI:15361"/>
        <dbReference type="ChEBI" id="CHEBI:15377"/>
        <dbReference type="ChEBI" id="CHEBI:16008"/>
        <dbReference type="ChEBI" id="CHEBI:59353"/>
        <dbReference type="EC" id="4.1.2.45"/>
    </reaction>
</comment>
<comment type="activity regulation">
    <text evidence="1 2">Inhibited bye p-chloromercuribenzoate and salicylaldehyde. Activated by salicylate.</text>
</comment>
<comment type="biophysicochemical properties">
    <kinetics>
        <KM evidence="2">6 uM for 2,6-DHBP (at pH 7)</KM>
        <KM evidence="2">15 uM for 2,4-DHBP (at pH 7)</KM>
        <KM evidence="2">17 uM for THBPA (at pH 7)</KM>
    </kinetics>
    <phDependence>
        <text evidence="2">Optimum pH is 8.</text>
    </phDependence>
</comment>
<comment type="pathway">
    <text>Aromatic compound metabolism; naphthalene degradation.</text>
</comment>
<comment type="subunit">
    <text evidence="2">Homotrimer.</text>
</comment>
<comment type="similarity">
    <text evidence="3">Belongs to the DapA family.</text>
</comment>
<protein>
    <recommendedName>
        <fullName>Trans-O-hydroxybenzylidenepyruvate hydratase-aldolase</fullName>
        <shortName>THBPA hydratase-aldolase</shortName>
        <ecNumber>4.1.2.45</ecNumber>
    </recommendedName>
    <alternativeName>
        <fullName>2'-hydroxybenzalpyruvate aldolase</fullName>
    </alternativeName>
</protein>
<feature type="initiator methionine" description="Removed" evidence="2">
    <location>
        <position position="1"/>
    </location>
</feature>
<feature type="chain" id="PRO_0000423057" description="Trans-O-hydroxybenzylidenepyruvate hydratase-aldolase">
    <location>
        <begin position="2"/>
        <end position="328"/>
    </location>
</feature>
<sequence>MARTLMKPDDVKGAWAIIPTPAKDDASDWRATKTVDLDETARVVNGLIDAGINGILSMGTLGEAATMTHDEKLDFIKALVDAAAGRVPIFVGTTCLNTRDTIALTRQALDIGADGTMLGVPMWCAPSVDVAVQFYKDLAEAVPEMNIAIYANPEAFKFDFPRSFWAQVAEIPQVVTAKYIGVAHLLPDLAAIRGRIKLLPIDFDYYGAARMDESIDAFWSSGAVCDPLVTTTLRDLVSQARATGDWSAARAFMGRLGPTAAPLFPNGSFKEFSTYNIALEKARMNAGGWMNAGPVRPPYHLCPEPYLEGARLSGRMWAELGKALAAEK</sequence>
<gene>
    <name type="primary">nsaE</name>
</gene>
<organism>
    <name type="scientific">Sphingobium xenophagum</name>
    <dbReference type="NCBI Taxonomy" id="121428"/>
    <lineage>
        <taxon>Bacteria</taxon>
        <taxon>Pseudomonadati</taxon>
        <taxon>Pseudomonadota</taxon>
        <taxon>Alphaproteobacteria</taxon>
        <taxon>Sphingomonadales</taxon>
        <taxon>Sphingomonadaceae</taxon>
        <taxon>Sphingobium</taxon>
    </lineage>
</organism>
<dbReference type="EC" id="4.1.2.45"/>
<dbReference type="EMBL" id="U65001">
    <property type="protein sequence ID" value="AAD45417.1"/>
    <property type="molecule type" value="Genomic_DNA"/>
</dbReference>
<dbReference type="SMR" id="Q9X9Q6"/>
<dbReference type="KEGG" id="ag:AAD45417"/>
<dbReference type="BRENDA" id="4.1.2.45">
    <property type="organism ID" value="10830"/>
</dbReference>
<dbReference type="UniPathway" id="UPA00082"/>
<dbReference type="GO" id="GO:0008840">
    <property type="term" value="F:4-hydroxy-tetrahydrodipicolinate synthase activity"/>
    <property type="evidence" value="ECO:0007669"/>
    <property type="project" value="TreeGrafter"/>
</dbReference>
<dbReference type="GO" id="GO:0016832">
    <property type="term" value="F:aldehyde-lyase activity"/>
    <property type="evidence" value="ECO:0000314"/>
    <property type="project" value="UniProtKB"/>
</dbReference>
<dbReference type="GO" id="GO:0018813">
    <property type="term" value="F:trans-o-hydroxybenzylidenepyruvate hydratase-aldolase activity"/>
    <property type="evidence" value="ECO:0007669"/>
    <property type="project" value="UniProtKB-EC"/>
</dbReference>
<dbReference type="GO" id="GO:1901170">
    <property type="term" value="P:naphthalene catabolic process"/>
    <property type="evidence" value="ECO:0000314"/>
    <property type="project" value="UniProtKB"/>
</dbReference>
<dbReference type="CDD" id="cd00952">
    <property type="entry name" value="CHBPH_aldolase"/>
    <property type="match status" value="1"/>
</dbReference>
<dbReference type="FunFam" id="3.20.20.70:FF:000190">
    <property type="entry name" value="Trans-o-hydroxybenzylidenepyruvate hydratase-aldolase"/>
    <property type="match status" value="1"/>
</dbReference>
<dbReference type="Gene3D" id="3.20.20.70">
    <property type="entry name" value="Aldolase class I"/>
    <property type="match status" value="1"/>
</dbReference>
<dbReference type="InterPro" id="IPR013785">
    <property type="entry name" value="Aldolase_TIM"/>
</dbReference>
<dbReference type="InterPro" id="IPR002220">
    <property type="entry name" value="DapA-like"/>
</dbReference>
<dbReference type="InterPro" id="IPR048038">
    <property type="entry name" value="HBPHA/CBPHA"/>
</dbReference>
<dbReference type="PANTHER" id="PTHR12128:SF66">
    <property type="entry name" value="4-HYDROXY-2-OXOGLUTARATE ALDOLASE, MITOCHONDRIAL"/>
    <property type="match status" value="1"/>
</dbReference>
<dbReference type="PANTHER" id="PTHR12128">
    <property type="entry name" value="DIHYDRODIPICOLINATE SYNTHASE"/>
    <property type="match status" value="1"/>
</dbReference>
<dbReference type="Pfam" id="PF00701">
    <property type="entry name" value="DHDPS"/>
    <property type="match status" value="1"/>
</dbReference>
<dbReference type="PIRSF" id="PIRSF001365">
    <property type="entry name" value="DHDPS"/>
    <property type="match status" value="1"/>
</dbReference>
<dbReference type="PRINTS" id="PR00146">
    <property type="entry name" value="DHPICSNTHASE"/>
</dbReference>
<dbReference type="SMART" id="SM01130">
    <property type="entry name" value="DHDPS"/>
    <property type="match status" value="1"/>
</dbReference>
<dbReference type="SUPFAM" id="SSF51569">
    <property type="entry name" value="Aldolase"/>
    <property type="match status" value="1"/>
</dbReference>
<name>NSAE_SPHXE</name>
<reference key="1">
    <citation type="journal article" date="2006" name="Microbiology">
        <title>Identification and functional analysis of the genes for naphthalenesulfonate catabolism by Sphingomonas xenophaga BN6.</title>
        <authorList>
            <person name="Keck A."/>
            <person name="Conradt D."/>
            <person name="Mahler A."/>
            <person name="Stolz A."/>
            <person name="Mattes R."/>
            <person name="Klein J."/>
        </authorList>
    </citation>
    <scope>NUCLEOTIDE SEQUENCE [GENOMIC DNA]</scope>
    <scope>FUNCTION</scope>
    <scope>ACTIVITY REGULATION</scope>
    <source>
        <strain>DSM 6383 / KCTC 2978 / NBRC 107872 / BN6</strain>
    </source>
</reference>
<reference key="2">
    <citation type="journal article" date="1993" name="J. Biol. Chem.">
        <title>Purification and properties of 2'-hydroxybenzalpyruvate aldolase from a bacterium that degrades naphthalenesulfonates.</title>
        <authorList>
            <person name="Kuhm A.E."/>
            <person name="Knackmuss H.J."/>
            <person name="Stolz A."/>
        </authorList>
    </citation>
    <scope>PROTEIN SEQUENCE OF 2-27</scope>
    <scope>FUNCTION</scope>
    <scope>CATALYTIC ACTIVITY</scope>
    <scope>BIOPHYSICOCHEMICAL PROPERTIES</scope>
    <scope>ACTIVITY REGULATION</scope>
    <scope>SUBSTRATE SPECIFICITY</scope>
    <scope>SUBUNIT</scope>
    <source>
        <strain>DSM 6383 / KCTC 2978 / NBRC 107872 / BN6</strain>
    </source>
</reference>
<proteinExistence type="evidence at protein level"/>
<keyword id="KW-0058">Aromatic hydrocarbons catabolism</keyword>
<keyword id="KW-0903">Direct protein sequencing</keyword>
<keyword id="KW-0456">Lyase</keyword>
<keyword id="KW-0670">Pyruvate</keyword>